<name>BAMB_KANKD</name>
<reference key="1">
    <citation type="journal article" date="2009" name="Stand. Genomic Sci.">
        <title>Complete genome sequence of Kangiella koreensis type strain (SW-125).</title>
        <authorList>
            <person name="Han C."/>
            <person name="Sikorski J."/>
            <person name="Lapidus A."/>
            <person name="Nolan M."/>
            <person name="Glavina Del Rio T."/>
            <person name="Tice H."/>
            <person name="Cheng J.F."/>
            <person name="Lucas S."/>
            <person name="Chen F."/>
            <person name="Copeland A."/>
            <person name="Ivanova N."/>
            <person name="Mavromatis K."/>
            <person name="Ovchinnikova G."/>
            <person name="Pati A."/>
            <person name="Bruce D."/>
            <person name="Goodwin L."/>
            <person name="Pitluck S."/>
            <person name="Chen A."/>
            <person name="Palaniappan K."/>
            <person name="Land M."/>
            <person name="Hauser L."/>
            <person name="Chang Y.J."/>
            <person name="Jeffries C.D."/>
            <person name="Chain P."/>
            <person name="Saunders E."/>
            <person name="Brettin T."/>
            <person name="Goker M."/>
            <person name="Tindall B.J."/>
            <person name="Bristow J."/>
            <person name="Eisen J.A."/>
            <person name="Markowitz V."/>
            <person name="Hugenholtz P."/>
            <person name="Kyrpides N.C."/>
            <person name="Klenk H.P."/>
            <person name="Detter J.C."/>
        </authorList>
    </citation>
    <scope>NUCLEOTIDE SEQUENCE [LARGE SCALE GENOMIC DNA]</scope>
    <source>
        <strain>DSM 16069 / JCM 12317 / KCTC 12182 / SW-125</strain>
    </source>
</reference>
<dbReference type="EMBL" id="CP001707">
    <property type="protein sequence ID" value="ACV27247.1"/>
    <property type="molecule type" value="Genomic_DNA"/>
</dbReference>
<dbReference type="RefSeq" id="WP_015780852.1">
    <property type="nucleotide sequence ID" value="NC_013166.1"/>
</dbReference>
<dbReference type="SMR" id="C7R5S3"/>
<dbReference type="FunCoup" id="C7R5S3">
    <property type="interactions" value="85"/>
</dbReference>
<dbReference type="STRING" id="523791.Kkor_1835"/>
<dbReference type="KEGG" id="kko:Kkor_1835"/>
<dbReference type="eggNOG" id="COG1520">
    <property type="taxonomic scope" value="Bacteria"/>
</dbReference>
<dbReference type="HOGENOM" id="CLU_027480_0_1_6"/>
<dbReference type="InParanoid" id="C7R5S3"/>
<dbReference type="OrthoDB" id="5173551at2"/>
<dbReference type="Proteomes" id="UP000001231">
    <property type="component" value="Chromosome"/>
</dbReference>
<dbReference type="GO" id="GO:0009279">
    <property type="term" value="C:cell outer membrane"/>
    <property type="evidence" value="ECO:0007669"/>
    <property type="project" value="UniProtKB-SubCell"/>
</dbReference>
<dbReference type="GO" id="GO:0043165">
    <property type="term" value="P:Gram-negative-bacterium-type cell outer membrane assembly"/>
    <property type="evidence" value="ECO:0007669"/>
    <property type="project" value="UniProtKB-UniRule"/>
</dbReference>
<dbReference type="GO" id="GO:0051205">
    <property type="term" value="P:protein insertion into membrane"/>
    <property type="evidence" value="ECO:0007669"/>
    <property type="project" value="UniProtKB-UniRule"/>
</dbReference>
<dbReference type="Gene3D" id="2.130.10.10">
    <property type="entry name" value="YVTN repeat-like/Quinoprotein amine dehydrogenase"/>
    <property type="match status" value="1"/>
</dbReference>
<dbReference type="HAMAP" id="MF_00923">
    <property type="entry name" value="OM_assembly_BamB"/>
    <property type="match status" value="1"/>
</dbReference>
<dbReference type="InterPro" id="IPR017687">
    <property type="entry name" value="BamB"/>
</dbReference>
<dbReference type="InterPro" id="IPR018391">
    <property type="entry name" value="PQQ_b-propeller_rpt"/>
</dbReference>
<dbReference type="InterPro" id="IPR002372">
    <property type="entry name" value="PQQ_rpt_dom"/>
</dbReference>
<dbReference type="InterPro" id="IPR011047">
    <property type="entry name" value="Quinoprotein_ADH-like_sf"/>
</dbReference>
<dbReference type="InterPro" id="IPR015943">
    <property type="entry name" value="WD40/YVTN_repeat-like_dom_sf"/>
</dbReference>
<dbReference type="NCBIfam" id="TIGR03300">
    <property type="entry name" value="assembly_YfgL"/>
    <property type="match status" value="1"/>
</dbReference>
<dbReference type="PANTHER" id="PTHR34512">
    <property type="entry name" value="CELL SURFACE PROTEIN"/>
    <property type="match status" value="1"/>
</dbReference>
<dbReference type="PANTHER" id="PTHR34512:SF30">
    <property type="entry name" value="OUTER MEMBRANE PROTEIN ASSEMBLY FACTOR BAMB"/>
    <property type="match status" value="1"/>
</dbReference>
<dbReference type="Pfam" id="PF13360">
    <property type="entry name" value="PQQ_2"/>
    <property type="match status" value="1"/>
</dbReference>
<dbReference type="SMART" id="SM00564">
    <property type="entry name" value="PQQ"/>
    <property type="match status" value="6"/>
</dbReference>
<dbReference type="SUPFAM" id="SSF50998">
    <property type="entry name" value="Quinoprotein alcohol dehydrogenase-like"/>
    <property type="match status" value="1"/>
</dbReference>
<accession>C7R5S3</accession>
<keyword id="KW-0998">Cell outer membrane</keyword>
<keyword id="KW-0449">Lipoprotein</keyword>
<keyword id="KW-0472">Membrane</keyword>
<keyword id="KW-0564">Palmitate</keyword>
<keyword id="KW-1185">Reference proteome</keyword>
<keyword id="KW-0732">Signal</keyword>
<comment type="function">
    <text evidence="1">Part of the outer membrane protein assembly complex, which is involved in assembly and insertion of beta-barrel proteins into the outer membrane.</text>
</comment>
<comment type="subunit">
    <text evidence="1">Part of the Bam complex.</text>
</comment>
<comment type="subcellular location">
    <subcellularLocation>
        <location evidence="1">Cell outer membrane</location>
        <topology evidence="1">Lipid-anchor</topology>
    </subcellularLocation>
</comment>
<comment type="similarity">
    <text evidence="1">Belongs to the BamB family.</text>
</comment>
<gene>
    <name evidence="1" type="primary">bamB</name>
    <name type="ordered locus">Kkor_1835</name>
</gene>
<feature type="signal peptide" evidence="1">
    <location>
        <begin position="1"/>
        <end position="21"/>
    </location>
</feature>
<feature type="chain" id="PRO_5000512661" description="Outer membrane protein assembly factor BamB">
    <location>
        <begin position="22"/>
        <end position="388"/>
    </location>
</feature>
<feature type="lipid moiety-binding region" description="N-palmitoyl cysteine" evidence="1">
    <location>
        <position position="22"/>
    </location>
</feature>
<feature type="lipid moiety-binding region" description="S-diacylglycerol cysteine" evidence="1">
    <location>
        <position position="22"/>
    </location>
</feature>
<protein>
    <recommendedName>
        <fullName evidence="1">Outer membrane protein assembly factor BamB</fullName>
    </recommendedName>
</protein>
<organism>
    <name type="scientific">Kangiella koreensis (strain DSM 16069 / JCM 12317 / KCTC 12182 / SW-125)</name>
    <dbReference type="NCBI Taxonomy" id="523791"/>
    <lineage>
        <taxon>Bacteria</taxon>
        <taxon>Pseudomonadati</taxon>
        <taxon>Pseudomonadota</taxon>
        <taxon>Gammaproteobacteria</taxon>
        <taxon>Kangiellales</taxon>
        <taxon>Kangiellaceae</taxon>
        <taxon>Kangiella</taxon>
    </lineage>
</organism>
<sequence length="388" mass="42659">MILGWTQRIFTLLVVVTLLAACADEVVNPPKELADIEEKFSVQSSWVEVIGQGDEEKFNSLSPALWQDKIITADVDGLITAFDIKSGKVIWETNLKQPLSGGVTANAGLVAVGTKNAQVHVLDVNDGKQLWHVNVTTEVLAKPAISDGRLVVRTPDGRIFAYSLATQKQEWFYDRIIPNLTLRGTSAAVATSGVVITGFANGKMAAFNLRTGDMLWEQSISAPRGSSEISRIVDVDSTPVVYSNYLYAAGFNGFAIAMDLTNGRYLWREDASVTEELLVDARRVYLVDTKGRIVALDRITGEEVWTQEGLLYRKPTGAADNQDYVVVGDFEGYLHWLDKSTGEFVARIHLDRYGIGGTPIVTDEHVIATTRYGYIHVLENPLATSSEE</sequence>
<proteinExistence type="inferred from homology"/>
<evidence type="ECO:0000255" key="1">
    <source>
        <dbReference type="HAMAP-Rule" id="MF_00923"/>
    </source>
</evidence>